<feature type="chain" id="PRO_1000138338" description="UPF0434 protein VFMJ11_A0475">
    <location>
        <begin position="1"/>
        <end position="65"/>
    </location>
</feature>
<protein>
    <recommendedName>
        <fullName evidence="1">UPF0434 protein VFMJ11_A0475</fullName>
    </recommendedName>
</protein>
<name>Y3275_ALIFM</name>
<sequence length="65" mass="7564">MDYRLLEIVACPVCKGKLNYDKDKQELICKIDRLAYPIKDGIPVMLEPEARRMTMEEVESCRSQS</sequence>
<comment type="similarity">
    <text evidence="1">Belongs to the UPF0434 family.</text>
</comment>
<evidence type="ECO:0000255" key="1">
    <source>
        <dbReference type="HAMAP-Rule" id="MF_01187"/>
    </source>
</evidence>
<proteinExistence type="inferred from homology"/>
<gene>
    <name type="ordered locus">VFMJ11_A0475</name>
</gene>
<dbReference type="EMBL" id="CP001133">
    <property type="protein sequence ID" value="ACH64060.1"/>
    <property type="molecule type" value="Genomic_DNA"/>
</dbReference>
<dbReference type="RefSeq" id="WP_005422539.1">
    <property type="nucleotide sequence ID" value="NC_011186.1"/>
</dbReference>
<dbReference type="SMR" id="B5ETK6"/>
<dbReference type="GeneID" id="54165752"/>
<dbReference type="KEGG" id="vfm:VFMJ11_A0475"/>
<dbReference type="HOGENOM" id="CLU_155659_3_1_6"/>
<dbReference type="Proteomes" id="UP000001857">
    <property type="component" value="Chromosome II"/>
</dbReference>
<dbReference type="GO" id="GO:0005829">
    <property type="term" value="C:cytosol"/>
    <property type="evidence" value="ECO:0007669"/>
    <property type="project" value="TreeGrafter"/>
</dbReference>
<dbReference type="FunFam" id="2.20.25.10:FF:000002">
    <property type="entry name" value="UPF0434 protein YcaR"/>
    <property type="match status" value="1"/>
</dbReference>
<dbReference type="Gene3D" id="2.20.25.10">
    <property type="match status" value="1"/>
</dbReference>
<dbReference type="HAMAP" id="MF_01187">
    <property type="entry name" value="UPF0434"/>
    <property type="match status" value="1"/>
</dbReference>
<dbReference type="InterPro" id="IPR005651">
    <property type="entry name" value="Trm112-like"/>
</dbReference>
<dbReference type="PANTHER" id="PTHR33505:SF4">
    <property type="entry name" value="PROTEIN PREY, MITOCHONDRIAL"/>
    <property type="match status" value="1"/>
</dbReference>
<dbReference type="PANTHER" id="PTHR33505">
    <property type="entry name" value="ZGC:162634"/>
    <property type="match status" value="1"/>
</dbReference>
<dbReference type="Pfam" id="PF03966">
    <property type="entry name" value="Trm112p"/>
    <property type="match status" value="1"/>
</dbReference>
<dbReference type="SUPFAM" id="SSF158997">
    <property type="entry name" value="Trm112p-like"/>
    <property type="match status" value="1"/>
</dbReference>
<accession>B5ETK6</accession>
<organism>
    <name type="scientific">Aliivibrio fischeri (strain MJ11)</name>
    <name type="common">Vibrio fischeri</name>
    <dbReference type="NCBI Taxonomy" id="388396"/>
    <lineage>
        <taxon>Bacteria</taxon>
        <taxon>Pseudomonadati</taxon>
        <taxon>Pseudomonadota</taxon>
        <taxon>Gammaproteobacteria</taxon>
        <taxon>Vibrionales</taxon>
        <taxon>Vibrionaceae</taxon>
        <taxon>Aliivibrio</taxon>
    </lineage>
</organism>
<reference key="1">
    <citation type="submission" date="2008-08" db="EMBL/GenBank/DDBJ databases">
        <title>Complete sequence of Vibrio fischeri strain MJ11.</title>
        <authorList>
            <person name="Mandel M.J."/>
            <person name="Stabb E.V."/>
            <person name="Ruby E.G."/>
            <person name="Ferriera S."/>
            <person name="Johnson J."/>
            <person name="Kravitz S."/>
            <person name="Beeson K."/>
            <person name="Sutton G."/>
            <person name="Rogers Y.-H."/>
            <person name="Friedman R."/>
            <person name="Frazier M."/>
            <person name="Venter J.C."/>
        </authorList>
    </citation>
    <scope>NUCLEOTIDE SEQUENCE [LARGE SCALE GENOMIC DNA]</scope>
    <source>
        <strain>MJ11</strain>
    </source>
</reference>